<sequence>MAVISKVTYSLYDQKEINATDIIISHVKNDDDIGTVKDGRLGAMDGALCKTCGKTELECFGHWGKVSIYKTHIVKPEFISEIIRLLNHICIHCGLLRSREPYSNDINLKELSGHALRRLKDKILSKKKSCWNSECMQPYQKISFSKKKVCFVNKLDDINVPNSLIYQKLISIHEKFWPLLEIYQYPANLFYTDYFPIPPLIIRPAISFWIDSIPKETNELTYLLGMIVKNCNLNADEQVIQKAVIEYDDIKIISNNTTSINLSYITSGKNNMIRSYIVARRKDQTARSVIGPSTSITVNEVGMPAYIRNTLTEKIFVNAFTVNKVKQLLASNQVKFYFNKRLNQLTRIRQGKFIKNKIHLLPGDWVEVAVQEYTSIIFGRQPSLHRYNVIASSIRATEGDTIKISPGIANSQNADFDGDEEWMILEQNPKAVVEQSILMYPTTLLKHDIHGAPVYGSIQDEIVAAYSLFRIQDLCLDEVLNILGKYGREFDPKGKCKFSGKDIYTYLIGEKINYPGLLKDGEIIANDVDSNFVVAMRHLSLAGLLSDHKSNVEGINFIIKSSYVFKRYLSIYGFGVTFKDLRPNSTFTNKLEAINVEKIELIKEAYAKYLKDVRDGKIVPLSKALEADYVESMLSNLTNLNIREIEEHMRQTLIDNPDNNLLKMAKAGYKVNPTELMYILGTYGQQRIDGEPAETRVLGRVLPYYLPDSKDPEGRGYILNSLTKGLTGSQYYFSMLVARSQSTDIVCETSRTGTLARKIIKKMEDMVVDGYGQVVIGNTLIKYAANYTKILGSVCKPVDLIYPDESMTWYLEISALWNKIKQGFVYSQKQKLAKKTLAPFNFLVFVKPTTEDNAIKVKDLYDMIHNVIDDVREKYFFTVSNIDFMEYIFLTHLNPSRIRITKETAITIFEKFYEKLNYTLGGGTPIGIISAQVLSEKFTQQALSSFHTTEKSGAVKQKLGFNEFNNLTNLSKNKTEIITLVSDDISKLQSVKINFEFVCLGELNPNITLRKETDRYVVDIIVNRLYIKRAEITELVVEYMIERFISFSVIVKEWGMETFIEDEDNIRFTVYLNFVEPEELNLSKFMMVLPGAANKGKISKFKIPISDYTGYDDFNQTKKLNKMTVELMNLKELGSFDLENVNVYPGVWNTYDIFGIEAARGYLCEAMLNTYGEGFDYLYQPCDLLASLLCASYEPESVNKFKFGAASTLKRATFGDNKALLNAALHKKSEPINDNSSCHFFSKVPNIGTGYYKYFIDLGLLMRMERKLSDKISSQKIKEMEETEDF</sequence>
<organism>
    <name type="scientific">Variola virus (isolate Human/India/Ind3/1967)</name>
    <name type="common">VARV</name>
    <name type="synonym">Smallpox virus</name>
    <dbReference type="NCBI Taxonomy" id="587200"/>
    <lineage>
        <taxon>Viruses</taxon>
        <taxon>Varidnaviria</taxon>
        <taxon>Bamfordvirae</taxon>
        <taxon>Nucleocytoviricota</taxon>
        <taxon>Pokkesviricetes</taxon>
        <taxon>Chitovirales</taxon>
        <taxon>Poxviridae</taxon>
        <taxon>Chordopoxvirinae</taxon>
        <taxon>Orthopoxvirus</taxon>
        <taxon>Variola virus</taxon>
    </lineage>
</organism>
<protein>
    <recommendedName>
        <fullName>DNA-directed RNA polymerase 147 kDa polypeptide</fullName>
        <ecNumber>2.7.7.6</ecNumber>
    </recommendedName>
</protein>
<name>RP147_VAR67</name>
<accession>P0DOO1</accession>
<accession>P33053</accession>
<keyword id="KW-0240">DNA-directed RNA polymerase</keyword>
<keyword id="KW-0244">Early protein</keyword>
<keyword id="KW-0548">Nucleotidyltransferase</keyword>
<keyword id="KW-1185">Reference proteome</keyword>
<keyword id="KW-0804">Transcription</keyword>
<keyword id="KW-0808">Transferase</keyword>
<keyword id="KW-0946">Virion</keyword>
<organismHost>
    <name type="scientific">Homo sapiens</name>
    <name type="common">Human</name>
    <dbReference type="NCBI Taxonomy" id="9606"/>
</organismHost>
<reference key="1">
    <citation type="journal article" date="1993" name="Virus Res.">
        <title>Nucleotide sequence analysis of variola virus HindIII M, L, I genome fragments.</title>
        <authorList>
            <person name="Shchelkunov S.N."/>
            <person name="Blinov V.M."/>
            <person name="Totmenin A.V."/>
            <person name="Marennikova S.S."/>
            <person name="Kolykhalov A.A."/>
            <person name="Frolov I.V."/>
            <person name="Chizhikov V.E."/>
            <person name="Gytorov V.V."/>
            <person name="Gashikov P.V."/>
            <person name="Belanov E.F."/>
            <person name="Belavin P.A."/>
            <person name="Resenchuk S.M."/>
            <person name="Andzhaparidze O.G."/>
            <person name="Sandakhchiev L.S."/>
        </authorList>
    </citation>
    <scope>NUCLEOTIDE SEQUENCE [LARGE SCALE GENOMIC DNA]</scope>
</reference>
<reference key="2">
    <citation type="journal article" date="1993" name="FEBS Lett.">
        <title>Genes of variola and vaccinia viruses necessary to overcome the host protective mechanisms.</title>
        <authorList>
            <person name="Shchelkunov S.N."/>
            <person name="Blinov V.M."/>
            <person name="Sandakhchiev L.S."/>
        </authorList>
    </citation>
    <scope>NUCLEOTIDE SEQUENCE [GENOMIC DNA]</scope>
</reference>
<gene>
    <name type="primary">OPG105</name>
    <name type="synonym">RPO147</name>
    <name type="ORF">J6R</name>
    <name type="ORF">L6R</name>
</gene>
<comment type="function">
    <text evidence="1">Part of the DNA-dependent RNA polymerase which catalyzes the transcription of viral DNA into RNA using the four ribonucleoside triphosphates as substrates. Responsible for the transcription of early, intermediate and late genes. DNA-dependent RNA polymerase associates with the early transcription factor (ETF), itself composed of OPG118 and OPG133, thereby allowing the early genes transcription. Late transcription, and probably also intermediate transcription, require newly synthesized RNA polymerase.</text>
</comment>
<comment type="catalytic activity">
    <reaction evidence="1">
        <text>RNA(n) + a ribonucleoside 5'-triphosphate = RNA(n+1) + diphosphate</text>
        <dbReference type="Rhea" id="RHEA:21248"/>
        <dbReference type="Rhea" id="RHEA-COMP:14527"/>
        <dbReference type="Rhea" id="RHEA-COMP:17342"/>
        <dbReference type="ChEBI" id="CHEBI:33019"/>
        <dbReference type="ChEBI" id="CHEBI:61557"/>
        <dbReference type="ChEBI" id="CHEBI:140395"/>
        <dbReference type="EC" id="2.7.7.6"/>
    </reaction>
</comment>
<comment type="subunit">
    <text evidence="1">The DNA-dependent RNA polymerase used for intermediate and late genes expression consists of eight subunits Rpo30/OPG66, Rpo7/OPG90, Rpo22/OPG103, Rpo147/OPG105, Rpo18/OPG119, Rpo19/OPG131, Rpo132/OPG151 and Rpo35/OPG156. The same holoenzyme, with the addition of the transcription-specificity factor OPG109, is used for early gene expression.</text>
</comment>
<comment type="subcellular location">
    <subcellularLocation>
        <location evidence="1">Virion</location>
    </subcellularLocation>
    <text evidence="1">All the enzymes and other proteins required to synthesize early mRNAs are packaged within the virion core along with the DNA genome. This is necessary because viral early mRNAs are synthesized within minutes after virus entry into the cell and are extruded through pores in the core particle.</text>
</comment>
<comment type="similarity">
    <text evidence="2">Belongs to the poxviridae DNA-directed RNA polymerase 147 kDa subunit family.</text>
</comment>
<feature type="chain" id="PRO_0000073921" description="DNA-directed RNA polymerase 147 kDa polypeptide">
    <location>
        <begin position="1"/>
        <end position="1286"/>
    </location>
</feature>
<dbReference type="EC" id="2.7.7.6"/>
<dbReference type="EMBL" id="X67119">
    <property type="protein sequence ID" value="CAA47582.1"/>
    <property type="molecule type" value="Genomic_DNA"/>
</dbReference>
<dbReference type="EMBL" id="S55844">
    <property type="protein sequence ID" value="AAB24679.1"/>
    <property type="molecule type" value="Genomic_DNA"/>
</dbReference>
<dbReference type="EMBL" id="X69198">
    <property type="protein sequence ID" value="CAA49024.1"/>
    <property type="molecule type" value="Genomic_DNA"/>
</dbReference>
<dbReference type="PIR" id="H36845">
    <property type="entry name" value="H36845"/>
</dbReference>
<dbReference type="RefSeq" id="NP_042127.1">
    <property type="nucleotide sequence ID" value="NC_001611.1"/>
</dbReference>
<dbReference type="SMR" id="P0DOO1"/>
<dbReference type="GeneID" id="1486469"/>
<dbReference type="KEGG" id="vg:1486469"/>
<dbReference type="Proteomes" id="UP000002060">
    <property type="component" value="Segment"/>
</dbReference>
<dbReference type="GO" id="GO:0000428">
    <property type="term" value="C:DNA-directed RNA polymerase complex"/>
    <property type="evidence" value="ECO:0007669"/>
    <property type="project" value="UniProtKB-KW"/>
</dbReference>
<dbReference type="GO" id="GO:0044423">
    <property type="term" value="C:virion component"/>
    <property type="evidence" value="ECO:0007669"/>
    <property type="project" value="UniProtKB-KW"/>
</dbReference>
<dbReference type="GO" id="GO:0003677">
    <property type="term" value="F:DNA binding"/>
    <property type="evidence" value="ECO:0007669"/>
    <property type="project" value="InterPro"/>
</dbReference>
<dbReference type="GO" id="GO:0003899">
    <property type="term" value="F:DNA-directed RNA polymerase activity"/>
    <property type="evidence" value="ECO:0007669"/>
    <property type="project" value="UniProtKB-EC"/>
</dbReference>
<dbReference type="GO" id="GO:0006351">
    <property type="term" value="P:DNA-templated transcription"/>
    <property type="evidence" value="ECO:0007669"/>
    <property type="project" value="InterPro"/>
</dbReference>
<dbReference type="Gene3D" id="1.10.132.30">
    <property type="match status" value="1"/>
</dbReference>
<dbReference type="Gene3D" id="2.40.40.20">
    <property type="match status" value="1"/>
</dbReference>
<dbReference type="Gene3D" id="6.10.250.2940">
    <property type="match status" value="1"/>
</dbReference>
<dbReference type="Gene3D" id="3.30.1490.180">
    <property type="entry name" value="RNA polymerase ii"/>
    <property type="match status" value="1"/>
</dbReference>
<dbReference type="Gene3D" id="4.10.860.120">
    <property type="entry name" value="RNA polymerase II, clamp domain"/>
    <property type="match status" value="1"/>
</dbReference>
<dbReference type="InterPro" id="IPR045867">
    <property type="entry name" value="DNA-dir_RpoC_beta_prime"/>
</dbReference>
<dbReference type="InterPro" id="IPR000722">
    <property type="entry name" value="RNA_pol_asu"/>
</dbReference>
<dbReference type="InterPro" id="IPR006592">
    <property type="entry name" value="RNA_pol_N"/>
</dbReference>
<dbReference type="InterPro" id="IPR007080">
    <property type="entry name" value="RNA_pol_Rpb1_1"/>
</dbReference>
<dbReference type="InterPro" id="IPR007066">
    <property type="entry name" value="RNA_pol_Rpb1_3"/>
</dbReference>
<dbReference type="InterPro" id="IPR007083">
    <property type="entry name" value="RNA_pol_Rpb1_4"/>
</dbReference>
<dbReference type="InterPro" id="IPR007081">
    <property type="entry name" value="RNA_pol_Rpb1_5"/>
</dbReference>
<dbReference type="InterPro" id="IPR044893">
    <property type="entry name" value="RNA_pol_Rpb1_clamp_domain"/>
</dbReference>
<dbReference type="InterPro" id="IPR038120">
    <property type="entry name" value="Rpb1_funnel_sf"/>
</dbReference>
<dbReference type="PANTHER" id="PTHR19376">
    <property type="entry name" value="DNA-DIRECTED RNA POLYMERASE"/>
    <property type="match status" value="1"/>
</dbReference>
<dbReference type="PANTHER" id="PTHR19376:SF32">
    <property type="entry name" value="DNA-DIRECTED RNA POLYMERASE III SUBUNIT RPC1"/>
    <property type="match status" value="1"/>
</dbReference>
<dbReference type="Pfam" id="PF04997">
    <property type="entry name" value="RNA_pol_Rpb1_1"/>
    <property type="match status" value="1"/>
</dbReference>
<dbReference type="Pfam" id="PF00623">
    <property type="entry name" value="RNA_pol_Rpb1_2"/>
    <property type="match status" value="1"/>
</dbReference>
<dbReference type="Pfam" id="PF04983">
    <property type="entry name" value="RNA_pol_Rpb1_3"/>
    <property type="match status" value="1"/>
</dbReference>
<dbReference type="Pfam" id="PF05000">
    <property type="entry name" value="RNA_pol_Rpb1_4"/>
    <property type="match status" value="1"/>
</dbReference>
<dbReference type="Pfam" id="PF04998">
    <property type="entry name" value="RNA_pol_Rpb1_5"/>
    <property type="match status" value="1"/>
</dbReference>
<dbReference type="SMART" id="SM00663">
    <property type="entry name" value="RPOLA_N"/>
    <property type="match status" value="1"/>
</dbReference>
<dbReference type="SUPFAM" id="SSF64484">
    <property type="entry name" value="beta and beta-prime subunits of DNA dependent RNA-polymerase"/>
    <property type="match status" value="1"/>
</dbReference>
<proteinExistence type="inferred from homology"/>
<evidence type="ECO:0000250" key="1">
    <source>
        <dbReference type="UniProtKB" id="O57204"/>
    </source>
</evidence>
<evidence type="ECO:0000305" key="2"/>